<dbReference type="EMBL" id="AE006914">
    <property type="protein sequence ID" value="AAL02550.1"/>
    <property type="molecule type" value="Genomic_DNA"/>
</dbReference>
<dbReference type="PIR" id="D97701">
    <property type="entry name" value="D97701"/>
</dbReference>
<dbReference type="SMR" id="Q92JQ5"/>
<dbReference type="KEGG" id="rco:RC0012"/>
<dbReference type="PATRIC" id="fig|272944.4.peg.12"/>
<dbReference type="HOGENOM" id="CLU_078784_0_0_5"/>
<dbReference type="Proteomes" id="UP000000816">
    <property type="component" value="Chromosome"/>
</dbReference>
<dbReference type="GO" id="GO:0005975">
    <property type="term" value="P:carbohydrate metabolic process"/>
    <property type="evidence" value="ECO:0007669"/>
    <property type="project" value="InterPro"/>
</dbReference>
<dbReference type="CDD" id="cd10963">
    <property type="entry name" value="CE4_RC0012_like"/>
    <property type="match status" value="1"/>
</dbReference>
<dbReference type="Gene3D" id="3.20.20.370">
    <property type="entry name" value="Glycoside hydrolase/deacetylase"/>
    <property type="match status" value="1"/>
</dbReference>
<dbReference type="InterPro" id="IPR011330">
    <property type="entry name" value="Glyco_hydro/deAcase_b/a-brl"/>
</dbReference>
<dbReference type="SUPFAM" id="SSF88713">
    <property type="entry name" value="Glycoside hydrolase/deacetylase"/>
    <property type="match status" value="1"/>
</dbReference>
<reference key="1">
    <citation type="journal article" date="2001" name="Science">
        <title>Mechanisms of evolution in Rickettsia conorii and R. prowazekii.</title>
        <authorList>
            <person name="Ogata H."/>
            <person name="Audic S."/>
            <person name="Renesto-Audiffren P."/>
            <person name="Fournier P.-E."/>
            <person name="Barbe V."/>
            <person name="Samson D."/>
            <person name="Roux V."/>
            <person name="Cossart P."/>
            <person name="Weissenbach J."/>
            <person name="Claverie J.-M."/>
            <person name="Raoult D."/>
        </authorList>
    </citation>
    <scope>NUCLEOTIDE SEQUENCE [LARGE SCALE GENOMIC DNA]</scope>
    <source>
        <strain>ATCC VR-613 / Malish 7</strain>
    </source>
</reference>
<name>Y012_RICCN</name>
<feature type="chain" id="PRO_0000101296" description="Uncharacterized protein RC0012">
    <location>
        <begin position="1"/>
        <end position="307"/>
    </location>
</feature>
<proteinExistence type="predicted"/>
<gene>
    <name type="ordered locus">RC0012</name>
</gene>
<organism>
    <name type="scientific">Rickettsia conorii (strain ATCC VR-613 / Malish 7)</name>
    <dbReference type="NCBI Taxonomy" id="272944"/>
    <lineage>
        <taxon>Bacteria</taxon>
        <taxon>Pseudomonadati</taxon>
        <taxon>Pseudomonadota</taxon>
        <taxon>Alphaproteobacteria</taxon>
        <taxon>Rickettsiales</taxon>
        <taxon>Rickettsiaceae</taxon>
        <taxon>Rickettsieae</taxon>
        <taxon>Rickettsia</taxon>
        <taxon>spotted fever group</taxon>
    </lineage>
</organism>
<accession>Q92JQ5</accession>
<protein>
    <recommendedName>
        <fullName>Uncharacterized protein RC0012</fullName>
    </recommendedName>
</protein>
<sequence length="307" mass="35167">MFFSLSYASEKAVIITDYKPVFLPVIAENKKIRIAIRSYLNNEKSYFVLVDPNSFKTEIALQELVILPTNKIEKENLLKKLSKTPYIKVLNKYSSTPYIQQNYGATSSMYKVKGQFLTIDMCPSSKSFEKDFFKKLVELSIKLNKPIPIAICVSGLWINKHTEEFLWLLKQQENGYLQITWVNHSFSHPYFKDKPLEDNFLLSNKDDFENEVLEAGKILVSYNIAPSPFFRFPGLVSDQTLIEKLKDLGFIPLGSNAWLAKGEKVQNGSFILVHGNSNEKAGIDLIMPMLPELKLLPIEKAFLLHDN</sequence>